<accession>A1KB00</accession>
<dbReference type="EMBL" id="AM406670">
    <property type="protein sequence ID" value="CAL96006.1"/>
    <property type="molecule type" value="Genomic_DNA"/>
</dbReference>
<dbReference type="RefSeq" id="WP_011767113.1">
    <property type="nucleotide sequence ID" value="NC_008702.1"/>
</dbReference>
<dbReference type="SMR" id="A1KB00"/>
<dbReference type="STRING" id="62928.azo3390"/>
<dbReference type="KEGG" id="aoa:dqs_3529"/>
<dbReference type="KEGG" id="azo:azo3390"/>
<dbReference type="eggNOG" id="COG0203">
    <property type="taxonomic scope" value="Bacteria"/>
</dbReference>
<dbReference type="HOGENOM" id="CLU_074407_2_0_4"/>
<dbReference type="OrthoDB" id="9809073at2"/>
<dbReference type="Proteomes" id="UP000002588">
    <property type="component" value="Chromosome"/>
</dbReference>
<dbReference type="GO" id="GO:0022625">
    <property type="term" value="C:cytosolic large ribosomal subunit"/>
    <property type="evidence" value="ECO:0007669"/>
    <property type="project" value="TreeGrafter"/>
</dbReference>
<dbReference type="GO" id="GO:0003735">
    <property type="term" value="F:structural constituent of ribosome"/>
    <property type="evidence" value="ECO:0007669"/>
    <property type="project" value="InterPro"/>
</dbReference>
<dbReference type="GO" id="GO:0006412">
    <property type="term" value="P:translation"/>
    <property type="evidence" value="ECO:0007669"/>
    <property type="project" value="UniProtKB-UniRule"/>
</dbReference>
<dbReference type="FunFam" id="3.90.1030.10:FF:000001">
    <property type="entry name" value="50S ribosomal protein L17"/>
    <property type="match status" value="1"/>
</dbReference>
<dbReference type="Gene3D" id="3.90.1030.10">
    <property type="entry name" value="Ribosomal protein L17"/>
    <property type="match status" value="1"/>
</dbReference>
<dbReference type="HAMAP" id="MF_01368">
    <property type="entry name" value="Ribosomal_bL17"/>
    <property type="match status" value="1"/>
</dbReference>
<dbReference type="InterPro" id="IPR000456">
    <property type="entry name" value="Ribosomal_bL17"/>
</dbReference>
<dbReference type="InterPro" id="IPR047859">
    <property type="entry name" value="Ribosomal_bL17_CS"/>
</dbReference>
<dbReference type="InterPro" id="IPR036373">
    <property type="entry name" value="Ribosomal_bL17_sf"/>
</dbReference>
<dbReference type="NCBIfam" id="TIGR00059">
    <property type="entry name" value="L17"/>
    <property type="match status" value="1"/>
</dbReference>
<dbReference type="PANTHER" id="PTHR14413:SF16">
    <property type="entry name" value="LARGE RIBOSOMAL SUBUNIT PROTEIN BL17M"/>
    <property type="match status" value="1"/>
</dbReference>
<dbReference type="PANTHER" id="PTHR14413">
    <property type="entry name" value="RIBOSOMAL PROTEIN L17"/>
    <property type="match status" value="1"/>
</dbReference>
<dbReference type="Pfam" id="PF01196">
    <property type="entry name" value="Ribosomal_L17"/>
    <property type="match status" value="1"/>
</dbReference>
<dbReference type="SUPFAM" id="SSF64263">
    <property type="entry name" value="Prokaryotic ribosomal protein L17"/>
    <property type="match status" value="1"/>
</dbReference>
<dbReference type="PROSITE" id="PS01167">
    <property type="entry name" value="RIBOSOMAL_L17"/>
    <property type="match status" value="1"/>
</dbReference>
<protein>
    <recommendedName>
        <fullName evidence="1">Large ribosomal subunit protein bL17</fullName>
    </recommendedName>
    <alternativeName>
        <fullName evidence="2">50S ribosomal protein L17</fullName>
    </alternativeName>
</protein>
<sequence>MRHRHGLRKLNRTSSHRQAMFRNMANALLRHEVIKTTLPKAKELRRVVEPMITLGKKPSLANRRLAFDRLRDREIVVKLFDELGPRYATRNGGYLRILKFGFRDGDNAPMALVELLDRPEAEVAEQEAVAA</sequence>
<organism>
    <name type="scientific">Azoarcus sp. (strain BH72)</name>
    <dbReference type="NCBI Taxonomy" id="418699"/>
    <lineage>
        <taxon>Bacteria</taxon>
        <taxon>Pseudomonadati</taxon>
        <taxon>Pseudomonadota</taxon>
        <taxon>Betaproteobacteria</taxon>
        <taxon>Rhodocyclales</taxon>
        <taxon>Zoogloeaceae</taxon>
        <taxon>Azoarcus</taxon>
    </lineage>
</organism>
<reference key="1">
    <citation type="journal article" date="2006" name="Nat. Biotechnol.">
        <title>Complete genome of the mutualistic, N2-fixing grass endophyte Azoarcus sp. strain BH72.</title>
        <authorList>
            <person name="Krause A."/>
            <person name="Ramakumar A."/>
            <person name="Bartels D."/>
            <person name="Battistoni F."/>
            <person name="Bekel T."/>
            <person name="Boch J."/>
            <person name="Boehm M."/>
            <person name="Friedrich F."/>
            <person name="Hurek T."/>
            <person name="Krause L."/>
            <person name="Linke B."/>
            <person name="McHardy A.C."/>
            <person name="Sarkar A."/>
            <person name="Schneiker S."/>
            <person name="Syed A.A."/>
            <person name="Thauer R."/>
            <person name="Vorhoelter F.-J."/>
            <person name="Weidner S."/>
            <person name="Puehler A."/>
            <person name="Reinhold-Hurek B."/>
            <person name="Kaiser O."/>
            <person name="Goesmann A."/>
        </authorList>
    </citation>
    <scope>NUCLEOTIDE SEQUENCE [LARGE SCALE GENOMIC DNA]</scope>
    <source>
        <strain>BH72</strain>
    </source>
</reference>
<name>RL17_AZOSB</name>
<proteinExistence type="inferred from homology"/>
<gene>
    <name evidence="1" type="primary">rplQ</name>
    <name type="ordered locus">azo3390</name>
</gene>
<keyword id="KW-1185">Reference proteome</keyword>
<keyword id="KW-0687">Ribonucleoprotein</keyword>
<keyword id="KW-0689">Ribosomal protein</keyword>
<feature type="chain" id="PRO_1000055767" description="Large ribosomal subunit protein bL17">
    <location>
        <begin position="1"/>
        <end position="131"/>
    </location>
</feature>
<comment type="subunit">
    <text evidence="1">Part of the 50S ribosomal subunit. Contacts protein L32.</text>
</comment>
<comment type="similarity">
    <text evidence="1">Belongs to the bacterial ribosomal protein bL17 family.</text>
</comment>
<evidence type="ECO:0000255" key="1">
    <source>
        <dbReference type="HAMAP-Rule" id="MF_01368"/>
    </source>
</evidence>
<evidence type="ECO:0000305" key="2"/>